<evidence type="ECO:0000250" key="1"/>
<evidence type="ECO:0000269" key="2">
    <source>
    </source>
</evidence>
<evidence type="ECO:0000305" key="3"/>
<feature type="peptide" id="PRO_0000044453" description="Polyphemusin-2">
    <location>
        <begin position="1"/>
        <end position="18"/>
    </location>
</feature>
<feature type="modified residue" description="Arginine amide" evidence="2">
    <location>
        <position position="18"/>
    </location>
</feature>
<feature type="disulfide bond" evidence="1">
    <location>
        <begin position="4"/>
        <end position="17"/>
    </location>
</feature>
<feature type="disulfide bond" evidence="1">
    <location>
        <begin position="8"/>
        <end position="13"/>
    </location>
</feature>
<reference key="1">
    <citation type="journal article" date="1989" name="J. Biochem.">
        <title>Antimicrobial peptides, isolated from horseshoe crab hemocytes, tachyplesin II, and polyphemusins I and II: chemical structures and biological activity.</title>
        <authorList>
            <person name="Miyata T."/>
            <person name="Tokunaga F."/>
            <person name="Yonega T."/>
            <person name="Yoshikawa K."/>
            <person name="Iwanaga S."/>
            <person name="Niwa M."/>
            <person name="Takao T."/>
            <person name="Shimonishi Y."/>
        </authorList>
    </citation>
    <scope>PROTEIN SEQUENCE</scope>
    <scope>AMIDATION AT ARG-18</scope>
</reference>
<comment type="function">
    <text>Significantly inhibits the growth of Gram-negative and Gram-positive bacteria.</text>
</comment>
<comment type="subcellular location">
    <subcellularLocation>
        <location>Secreted</location>
    </subcellularLocation>
</comment>
<comment type="tissue specificity">
    <text>Hemocytes.</text>
</comment>
<comment type="similarity">
    <text evidence="3">Belongs to the tachyplesin/polyphemusin family.</text>
</comment>
<sequence length="18" mass="2431">RRWCFRVCYKGFCYRKCR</sequence>
<accession>P14216</accession>
<dbReference type="PIR" id="JU0125">
    <property type="entry name" value="JU0125"/>
</dbReference>
<dbReference type="Proteomes" id="UP000694941">
    <property type="component" value="Unplaced"/>
</dbReference>
<dbReference type="GO" id="GO:0005576">
    <property type="term" value="C:extracellular region"/>
    <property type="evidence" value="ECO:0007669"/>
    <property type="project" value="UniProtKB-SubCell"/>
</dbReference>
<dbReference type="GO" id="GO:0042742">
    <property type="term" value="P:defense response to bacterium"/>
    <property type="evidence" value="ECO:0007669"/>
    <property type="project" value="UniProtKB-KW"/>
</dbReference>
<proteinExistence type="evidence at protein level"/>
<protein>
    <recommendedName>
        <fullName>Polyphemusin-2</fullName>
    </recommendedName>
    <alternativeName>
        <fullName>Polyphemusin II</fullName>
    </alternativeName>
</protein>
<organism>
    <name type="scientific">Limulus polyphemus</name>
    <name type="common">Atlantic horseshoe crab</name>
    <dbReference type="NCBI Taxonomy" id="6850"/>
    <lineage>
        <taxon>Eukaryota</taxon>
        <taxon>Metazoa</taxon>
        <taxon>Ecdysozoa</taxon>
        <taxon>Arthropoda</taxon>
        <taxon>Chelicerata</taxon>
        <taxon>Merostomata</taxon>
        <taxon>Xiphosura</taxon>
        <taxon>Limulidae</taxon>
        <taxon>Limulus</taxon>
    </lineage>
</organism>
<name>PPM2_LIMPO</name>
<keyword id="KW-0027">Amidation</keyword>
<keyword id="KW-0044">Antibiotic</keyword>
<keyword id="KW-0929">Antimicrobial</keyword>
<keyword id="KW-0903">Direct protein sequencing</keyword>
<keyword id="KW-1015">Disulfide bond</keyword>
<keyword id="KW-0964">Secreted</keyword>